<protein>
    <recommendedName>
        <fullName evidence="6">Globin-like protein 6</fullName>
    </recommendedName>
</protein>
<gene>
    <name evidence="8 10" type="primary">glb-6</name>
    <name type="ORF">C18C4.9</name>
</gene>
<evidence type="ECO:0000255" key="1">
    <source>
        <dbReference type="PROSITE-ProRule" id="PRU00238"/>
    </source>
</evidence>
<evidence type="ECO:0000256" key="2">
    <source>
        <dbReference type="SAM" id="MobiDB-lite"/>
    </source>
</evidence>
<evidence type="ECO:0000269" key="3">
    <source>
    </source>
</evidence>
<evidence type="ECO:0000269" key="4">
    <source>
    </source>
</evidence>
<evidence type="ECO:0000269" key="5">
    <source>
    </source>
</evidence>
<evidence type="ECO:0000303" key="6">
    <source>
    </source>
</evidence>
<evidence type="ECO:0000305" key="7"/>
<evidence type="ECO:0000312" key="8">
    <source>
        <dbReference type="EMBL" id="CCD65109.1"/>
    </source>
</evidence>
<evidence type="ECO:0000312" key="9">
    <source>
        <dbReference type="PDB" id="3MVC"/>
    </source>
</evidence>
<evidence type="ECO:0000312" key="10">
    <source>
        <dbReference type="WormBase" id="C18C4.9"/>
    </source>
</evidence>
<evidence type="ECO:0007829" key="11">
    <source>
        <dbReference type="PDB" id="3MVC"/>
    </source>
</evidence>
<reference evidence="8" key="1">
    <citation type="journal article" date="1998" name="Science">
        <title>Genome sequence of the nematode C. elegans: a platform for investigating biology.</title>
        <authorList>
            <consortium name="The C. elegans sequencing consortium"/>
        </authorList>
    </citation>
    <scope>NUCLEOTIDE SEQUENCE [LARGE SCALE GENOMIC DNA]</scope>
    <source>
        <strain evidence="8">Bristol N2</strain>
    </source>
</reference>
<reference evidence="7" key="2">
    <citation type="journal article" date="2007" name="BMC Genomics">
        <title>Wide diversity in structure and expression profiles among members of the Caenorhabditis elegans globin protein family.</title>
        <authorList>
            <person name="Hoogewijs D."/>
            <person name="Geuens E."/>
            <person name="Dewilde S."/>
            <person name="Vierstraete A."/>
            <person name="Moens L."/>
            <person name="Vinogradov S."/>
            <person name="Vanfleteren J.R."/>
        </authorList>
    </citation>
    <scope>DEVELOPMENTAL STAGE</scope>
    <scope>INDUCTION</scope>
    <source>
        <strain evidence="3">Bristol N2</strain>
    </source>
</reference>
<reference evidence="7" key="3">
    <citation type="journal article" date="2008" name="BMC Evol. Biol.">
        <title>The Caenorhabditis globin gene family reveals extensive nematode-specific radiation and diversification.</title>
        <authorList>
            <person name="Hoogewijs D."/>
            <person name="De Henau S."/>
            <person name="Dewilde S."/>
            <person name="Moens L."/>
            <person name="Couvreur M."/>
            <person name="Borgonie G."/>
            <person name="Vinogradov S.N."/>
            <person name="Roy S.W."/>
            <person name="Vanfleteren J.R."/>
        </authorList>
    </citation>
    <scope>TISSUE SPECIFICITY</scope>
</reference>
<reference evidence="7 9" key="4">
    <citation type="journal article" date="2010" name="Biochemistry">
        <title>Structure and properties of a bis-histidyl ligated globin from Caenorhabditis elegans.</title>
        <authorList>
            <person name="Yoon J."/>
            <person name="Herzik M.A."/>
            <person name="Winter M.B."/>
            <person name="Tran R."/>
            <person name="Olea C."/>
            <person name="Marletta M.A."/>
        </authorList>
    </citation>
    <scope>X-RAY CRYSTALLOGRAPHY (1.40 ANGSTROMS) OF 195-355 IN COMPLEX WITH HEME</scope>
    <scope>FUNCTION</scope>
</reference>
<organism>
    <name type="scientific">Caenorhabditis elegans</name>
    <dbReference type="NCBI Taxonomy" id="6239"/>
    <lineage>
        <taxon>Eukaryota</taxon>
        <taxon>Metazoa</taxon>
        <taxon>Ecdysozoa</taxon>
        <taxon>Nematoda</taxon>
        <taxon>Chromadorea</taxon>
        <taxon>Rhabditida</taxon>
        <taxon>Rhabditina</taxon>
        <taxon>Rhabditomorpha</taxon>
        <taxon>Rhabditoidea</taxon>
        <taxon>Rhabditidae</taxon>
        <taxon>Peloderinae</taxon>
        <taxon>Caenorhabditis</taxon>
    </lineage>
</organism>
<sequence>MGNQSTKSTHGTTRVSHSKSAHHNSSRVTSDVIPRSASAISSHERFFSDSQSSSPPAVCPVSAPGKYRNFPGKDVPPICLTDEYNNSDDEVFCSTRTSKQSPLATGCPRQNLGSPGNRRSVDSTNSDLLEAVTPRSHISVKRTVSSGTEHAPDHANMQKSSSLKFTRPGVRSETKETTPSTSSNPTMFPCIHQFLHLTQPQILFVRKTWNHARNQGALEPAISIFRNSFFKNPEIRQMIMFGTKNEGHERLKKHAQLFTVLMDDLIANLDSPSATVAGLREAGEKHVWPTRNQYGCPFHAHLLDQFATAMIERTLEWGEKKDRTETTQRGWTKIVLFVTEQLKEGFQDEQKRARRIKAQIKTSAGSSSFEISTKTKQSDMKRFHTLDNM</sequence>
<proteinExistence type="evidence at protein level"/>
<feature type="chain" id="PRO_0000422180" description="Globin-like protein 6">
    <location>
        <begin position="1"/>
        <end position="389"/>
    </location>
</feature>
<feature type="domain" description="Globin" evidence="1">
    <location>
        <begin position="196"/>
        <end position="347"/>
    </location>
</feature>
<feature type="region of interest" description="Disordered" evidence="2">
    <location>
        <begin position="1"/>
        <end position="38"/>
    </location>
</feature>
<feature type="region of interest" description="Disordered" evidence="2">
    <location>
        <begin position="96"/>
        <end position="123"/>
    </location>
</feature>
<feature type="region of interest" description="Disordered" evidence="2">
    <location>
        <begin position="143"/>
        <end position="185"/>
    </location>
</feature>
<feature type="region of interest" description="Disordered" evidence="2">
    <location>
        <begin position="367"/>
        <end position="389"/>
    </location>
</feature>
<feature type="compositionally biased region" description="Polar residues" evidence="2">
    <location>
        <begin position="1"/>
        <end position="15"/>
    </location>
</feature>
<feature type="compositionally biased region" description="Basic residues" evidence="2">
    <location>
        <begin position="16"/>
        <end position="25"/>
    </location>
</feature>
<feature type="compositionally biased region" description="Basic and acidic residues" evidence="2">
    <location>
        <begin position="376"/>
        <end position="389"/>
    </location>
</feature>
<feature type="binding site" description="axial binding residue">
    <location>
        <position position="254"/>
    </location>
    <ligand>
        <name>heme b</name>
        <dbReference type="ChEBI" id="CHEBI:60344"/>
    </ligand>
    <ligandPart>
        <name>Fe</name>
        <dbReference type="ChEBI" id="CHEBI:18248"/>
    </ligandPart>
</feature>
<feature type="binding site" description="axial binding residue">
    <location>
        <position position="286"/>
    </location>
    <ligand>
        <name>heme b</name>
        <dbReference type="ChEBI" id="CHEBI:60344"/>
    </ligand>
    <ligandPart>
        <name>Fe</name>
        <dbReference type="ChEBI" id="CHEBI:18248"/>
    </ligandPart>
</feature>
<feature type="helix" evidence="11">
    <location>
        <begin position="199"/>
        <end position="213"/>
    </location>
</feature>
<feature type="turn" evidence="11">
    <location>
        <begin position="217"/>
        <end position="220"/>
    </location>
</feature>
<feature type="helix" evidence="11">
    <location>
        <begin position="221"/>
        <end position="231"/>
    </location>
</feature>
<feature type="helix" evidence="11">
    <location>
        <begin position="233"/>
        <end position="239"/>
    </location>
</feature>
<feature type="helix" evidence="11">
    <location>
        <begin position="244"/>
        <end position="267"/>
    </location>
</feature>
<feature type="turn" evidence="11">
    <location>
        <begin position="268"/>
        <end position="270"/>
    </location>
</feature>
<feature type="helix" evidence="11">
    <location>
        <begin position="273"/>
        <end position="284"/>
    </location>
</feature>
<feature type="turn" evidence="11">
    <location>
        <begin position="291"/>
        <end position="294"/>
    </location>
</feature>
<feature type="helix" evidence="11">
    <location>
        <begin position="301"/>
        <end position="314"/>
    </location>
</feature>
<feature type="helix" evidence="11">
    <location>
        <begin position="325"/>
        <end position="352"/>
    </location>
</feature>
<keyword id="KW-0002">3D-structure</keyword>
<keyword id="KW-0349">Heme</keyword>
<keyword id="KW-0408">Iron</keyword>
<keyword id="KW-0479">Metal-binding</keyword>
<keyword id="KW-0561">Oxygen transport</keyword>
<keyword id="KW-1185">Reference proteome</keyword>
<keyword id="KW-0813">Transport</keyword>
<comment type="function">
    <text evidence="5">May play a role as physiological sensor for oxygen via redox signaling and/or electron transport.</text>
</comment>
<comment type="tissue specificity">
    <text evidence="4">Expressed in the head and tail neurons and nerve cord.</text>
</comment>
<comment type="developmental stage">
    <text evidence="3">Expressed at all developmental stages.</text>
</comment>
<comment type="induction">
    <text evidence="3">By anoxia.</text>
</comment>
<comment type="miscellaneous">
    <text evidence="5">Does not bind carbon monoxide (CO), nitric oxide (NO) or CN(-).</text>
</comment>
<comment type="similarity">
    <text evidence="1">Belongs to the globin family.</text>
</comment>
<dbReference type="EMBL" id="FO080608">
    <property type="protein sequence ID" value="CCD65109.1"/>
    <property type="molecule type" value="Genomic_DNA"/>
</dbReference>
<dbReference type="RefSeq" id="NP_504469.1">
    <property type="nucleotide sequence ID" value="NM_072068.6"/>
</dbReference>
<dbReference type="PDB" id="3MVC">
    <property type="method" value="X-ray"/>
    <property type="resolution" value="1.40 A"/>
    <property type="chains" value="A/B=195-355"/>
</dbReference>
<dbReference type="PDBsum" id="3MVC"/>
<dbReference type="SMR" id="Q18086"/>
<dbReference type="BioGRID" id="47625">
    <property type="interactions" value="3"/>
</dbReference>
<dbReference type="FunCoup" id="Q18086">
    <property type="interactions" value="312"/>
</dbReference>
<dbReference type="STRING" id="6239.C18C4.9.1"/>
<dbReference type="PaxDb" id="6239-C18C4.9"/>
<dbReference type="EnsemblMetazoa" id="C18C4.9.1">
    <property type="protein sequence ID" value="C18C4.9.1"/>
    <property type="gene ID" value="WBGene00015969"/>
</dbReference>
<dbReference type="GeneID" id="182780"/>
<dbReference type="KEGG" id="cel:CELE_C18C4.9"/>
<dbReference type="UCSC" id="C18C4.9">
    <property type="organism name" value="c. elegans"/>
</dbReference>
<dbReference type="AGR" id="WB:WBGene00015969"/>
<dbReference type="CTD" id="182780"/>
<dbReference type="WormBase" id="C18C4.9">
    <property type="protein sequence ID" value="CE29586"/>
    <property type="gene ID" value="WBGene00015969"/>
    <property type="gene designation" value="glb-6"/>
</dbReference>
<dbReference type="eggNOG" id="KOG3378">
    <property type="taxonomic scope" value="Eukaryota"/>
</dbReference>
<dbReference type="HOGENOM" id="CLU_710267_0_0_1"/>
<dbReference type="InParanoid" id="Q18086"/>
<dbReference type="OMA" id="NIWRQVY"/>
<dbReference type="OrthoDB" id="5848452at2759"/>
<dbReference type="EvolutionaryTrace" id="Q18086"/>
<dbReference type="PRO" id="PR:Q18086"/>
<dbReference type="Proteomes" id="UP000001940">
    <property type="component" value="Chromosome V"/>
</dbReference>
<dbReference type="Bgee" id="WBGene00015969">
    <property type="expression patterns" value="Expressed in pharyngeal muscle cell (C elegans) and 3 other cell types or tissues"/>
</dbReference>
<dbReference type="GO" id="GO:0020037">
    <property type="term" value="F:heme binding"/>
    <property type="evidence" value="ECO:0000314"/>
    <property type="project" value="UniProtKB"/>
</dbReference>
<dbReference type="GO" id="GO:0005506">
    <property type="term" value="F:iron ion binding"/>
    <property type="evidence" value="ECO:0000314"/>
    <property type="project" value="UniProtKB"/>
</dbReference>
<dbReference type="GO" id="GO:0019825">
    <property type="term" value="F:oxygen binding"/>
    <property type="evidence" value="ECO:0000314"/>
    <property type="project" value="UniProtKB"/>
</dbReference>
<dbReference type="GO" id="GO:0005344">
    <property type="term" value="F:oxygen carrier activity"/>
    <property type="evidence" value="ECO:0000318"/>
    <property type="project" value="GO_Central"/>
</dbReference>
<dbReference type="GO" id="GO:0015671">
    <property type="term" value="P:oxygen transport"/>
    <property type="evidence" value="ECO:0000318"/>
    <property type="project" value="GO_Central"/>
</dbReference>
<dbReference type="GO" id="GO:0001666">
    <property type="term" value="P:response to hypoxia"/>
    <property type="evidence" value="ECO:0000318"/>
    <property type="project" value="GO_Central"/>
</dbReference>
<dbReference type="CDD" id="cd01040">
    <property type="entry name" value="Mb-like"/>
    <property type="match status" value="1"/>
</dbReference>
<dbReference type="Gene3D" id="1.10.490.10">
    <property type="entry name" value="Globins"/>
    <property type="match status" value="1"/>
</dbReference>
<dbReference type="InterPro" id="IPR000971">
    <property type="entry name" value="Globin"/>
</dbReference>
<dbReference type="InterPro" id="IPR050532">
    <property type="entry name" value="Globin-like_OT"/>
</dbReference>
<dbReference type="InterPro" id="IPR009050">
    <property type="entry name" value="Globin-like_sf"/>
</dbReference>
<dbReference type="InterPro" id="IPR012292">
    <property type="entry name" value="Globin/Proto"/>
</dbReference>
<dbReference type="InterPro" id="IPR044399">
    <property type="entry name" value="Mb-like_M"/>
</dbReference>
<dbReference type="PANTHER" id="PTHR46458">
    <property type="entry name" value="BLR2807 PROTEIN"/>
    <property type="match status" value="1"/>
</dbReference>
<dbReference type="PANTHER" id="PTHR46458:SF8">
    <property type="entry name" value="GLOBIN-LIKE PROTEIN 6"/>
    <property type="match status" value="1"/>
</dbReference>
<dbReference type="Pfam" id="PF00042">
    <property type="entry name" value="Globin"/>
    <property type="match status" value="1"/>
</dbReference>
<dbReference type="SUPFAM" id="SSF46458">
    <property type="entry name" value="Globin-like"/>
    <property type="match status" value="1"/>
</dbReference>
<dbReference type="PROSITE" id="PS01033">
    <property type="entry name" value="GLOBIN"/>
    <property type="match status" value="1"/>
</dbReference>
<name>GLOB6_CAEEL</name>
<accession>Q18086</accession>